<organism>
    <name type="scientific">Shewanella sp. (strain W3-18-1)</name>
    <dbReference type="NCBI Taxonomy" id="351745"/>
    <lineage>
        <taxon>Bacteria</taxon>
        <taxon>Pseudomonadati</taxon>
        <taxon>Pseudomonadota</taxon>
        <taxon>Gammaproteobacteria</taxon>
        <taxon>Alteromonadales</taxon>
        <taxon>Shewanellaceae</taxon>
        <taxon>Shewanella</taxon>
    </lineage>
</organism>
<reference key="1">
    <citation type="submission" date="2006-12" db="EMBL/GenBank/DDBJ databases">
        <title>Complete sequence of Shewanella sp. W3-18-1.</title>
        <authorList>
            <consortium name="US DOE Joint Genome Institute"/>
            <person name="Copeland A."/>
            <person name="Lucas S."/>
            <person name="Lapidus A."/>
            <person name="Barry K."/>
            <person name="Detter J.C."/>
            <person name="Glavina del Rio T."/>
            <person name="Hammon N."/>
            <person name="Israni S."/>
            <person name="Dalin E."/>
            <person name="Tice H."/>
            <person name="Pitluck S."/>
            <person name="Chain P."/>
            <person name="Malfatti S."/>
            <person name="Shin M."/>
            <person name="Vergez L."/>
            <person name="Schmutz J."/>
            <person name="Larimer F."/>
            <person name="Land M."/>
            <person name="Hauser L."/>
            <person name="Kyrpides N."/>
            <person name="Lykidis A."/>
            <person name="Tiedje J."/>
            <person name="Richardson P."/>
        </authorList>
    </citation>
    <scope>NUCLEOTIDE SEQUENCE [LARGE SCALE GENOMIC DNA]</scope>
    <source>
        <strain>W3-18-1</strain>
    </source>
</reference>
<accession>A1RJY8</accession>
<comment type="function">
    <text evidence="1">Catalyzes the ATP-dependent conversion of 7-carboxy-7-deazaguanine (CDG) to 7-cyano-7-deazaguanine (preQ(0)).</text>
</comment>
<comment type="catalytic activity">
    <reaction evidence="1">
        <text>7-carboxy-7-deazaguanine + NH4(+) + ATP = 7-cyano-7-deazaguanine + ADP + phosphate + H2O + H(+)</text>
        <dbReference type="Rhea" id="RHEA:27982"/>
        <dbReference type="ChEBI" id="CHEBI:15377"/>
        <dbReference type="ChEBI" id="CHEBI:15378"/>
        <dbReference type="ChEBI" id="CHEBI:28938"/>
        <dbReference type="ChEBI" id="CHEBI:30616"/>
        <dbReference type="ChEBI" id="CHEBI:43474"/>
        <dbReference type="ChEBI" id="CHEBI:45075"/>
        <dbReference type="ChEBI" id="CHEBI:61036"/>
        <dbReference type="ChEBI" id="CHEBI:456216"/>
        <dbReference type="EC" id="6.3.4.20"/>
    </reaction>
</comment>
<comment type="cofactor">
    <cofactor evidence="1">
        <name>Zn(2+)</name>
        <dbReference type="ChEBI" id="CHEBI:29105"/>
    </cofactor>
    <text evidence="1">Binds 1 zinc ion per subunit.</text>
</comment>
<comment type="pathway">
    <text evidence="1">Purine metabolism; 7-cyano-7-deazaguanine biosynthesis.</text>
</comment>
<comment type="similarity">
    <text evidence="1">Belongs to the QueC family.</text>
</comment>
<comment type="sequence caution" evidence="2">
    <conflict type="erroneous initiation">
        <sequence resource="EMBL-CDS" id="ABM24983"/>
    </conflict>
</comment>
<proteinExistence type="inferred from homology"/>
<name>QUEC_SHESW</name>
<protein>
    <recommendedName>
        <fullName evidence="1">7-cyano-7-deazaguanine synthase</fullName>
        <ecNumber evidence="1">6.3.4.20</ecNumber>
    </recommendedName>
    <alternativeName>
        <fullName evidence="1">7-cyano-7-carbaguanine synthase</fullName>
    </alternativeName>
    <alternativeName>
        <fullName evidence="1">PreQ(0) synthase</fullName>
    </alternativeName>
    <alternativeName>
        <fullName evidence="1">Queuosine biosynthesis protein QueC</fullName>
    </alternativeName>
</protein>
<gene>
    <name evidence="1" type="primary">queC</name>
    <name type="ordered locus">Sputw3181_2155</name>
</gene>
<dbReference type="EC" id="6.3.4.20" evidence="1"/>
<dbReference type="EMBL" id="CP000503">
    <property type="protein sequence ID" value="ABM24983.1"/>
    <property type="status" value="ALT_INIT"/>
    <property type="molecule type" value="Genomic_DNA"/>
</dbReference>
<dbReference type="SMR" id="A1RJY8"/>
<dbReference type="KEGG" id="shw:Sputw3181_2155"/>
<dbReference type="HOGENOM" id="CLU_081854_0_0_6"/>
<dbReference type="UniPathway" id="UPA00391"/>
<dbReference type="Proteomes" id="UP000002597">
    <property type="component" value="Chromosome"/>
</dbReference>
<dbReference type="GO" id="GO:0005524">
    <property type="term" value="F:ATP binding"/>
    <property type="evidence" value="ECO:0007669"/>
    <property type="project" value="UniProtKB-UniRule"/>
</dbReference>
<dbReference type="GO" id="GO:0016879">
    <property type="term" value="F:ligase activity, forming carbon-nitrogen bonds"/>
    <property type="evidence" value="ECO:0007669"/>
    <property type="project" value="UniProtKB-UniRule"/>
</dbReference>
<dbReference type="GO" id="GO:0008270">
    <property type="term" value="F:zinc ion binding"/>
    <property type="evidence" value="ECO:0007669"/>
    <property type="project" value="UniProtKB-UniRule"/>
</dbReference>
<dbReference type="GO" id="GO:0008616">
    <property type="term" value="P:queuosine biosynthetic process"/>
    <property type="evidence" value="ECO:0007669"/>
    <property type="project" value="UniProtKB-UniRule"/>
</dbReference>
<dbReference type="CDD" id="cd01995">
    <property type="entry name" value="QueC-like"/>
    <property type="match status" value="1"/>
</dbReference>
<dbReference type="FunFam" id="3.40.50.620:FF:000017">
    <property type="entry name" value="7-cyano-7-deazaguanine synthase"/>
    <property type="match status" value="1"/>
</dbReference>
<dbReference type="Gene3D" id="3.40.50.620">
    <property type="entry name" value="HUPs"/>
    <property type="match status" value="1"/>
</dbReference>
<dbReference type="HAMAP" id="MF_01633">
    <property type="entry name" value="QueC"/>
    <property type="match status" value="1"/>
</dbReference>
<dbReference type="InterPro" id="IPR018317">
    <property type="entry name" value="QueC"/>
</dbReference>
<dbReference type="InterPro" id="IPR014729">
    <property type="entry name" value="Rossmann-like_a/b/a_fold"/>
</dbReference>
<dbReference type="NCBIfam" id="TIGR00364">
    <property type="entry name" value="7-cyano-7-deazaguanine synthase QueC"/>
    <property type="match status" value="1"/>
</dbReference>
<dbReference type="NCBIfam" id="NF008317">
    <property type="entry name" value="PRK11106.1"/>
    <property type="match status" value="1"/>
</dbReference>
<dbReference type="PANTHER" id="PTHR42914">
    <property type="entry name" value="7-CYANO-7-DEAZAGUANINE SYNTHASE"/>
    <property type="match status" value="1"/>
</dbReference>
<dbReference type="PANTHER" id="PTHR42914:SF1">
    <property type="entry name" value="7-CYANO-7-DEAZAGUANINE SYNTHASE"/>
    <property type="match status" value="1"/>
</dbReference>
<dbReference type="Pfam" id="PF06508">
    <property type="entry name" value="QueC"/>
    <property type="match status" value="1"/>
</dbReference>
<dbReference type="PIRSF" id="PIRSF006293">
    <property type="entry name" value="ExsB"/>
    <property type="match status" value="1"/>
</dbReference>
<dbReference type="SUPFAM" id="SSF52402">
    <property type="entry name" value="Adenine nucleotide alpha hydrolases-like"/>
    <property type="match status" value="1"/>
</dbReference>
<feature type="chain" id="PRO_0000336951" description="7-cyano-7-deazaguanine synthase">
    <location>
        <begin position="1"/>
        <end position="240"/>
    </location>
</feature>
<feature type="binding site" evidence="1">
    <location>
        <begin position="18"/>
        <end position="28"/>
    </location>
    <ligand>
        <name>ATP</name>
        <dbReference type="ChEBI" id="CHEBI:30616"/>
    </ligand>
</feature>
<feature type="binding site" evidence="1">
    <location>
        <position position="197"/>
    </location>
    <ligand>
        <name>Zn(2+)</name>
        <dbReference type="ChEBI" id="CHEBI:29105"/>
    </ligand>
</feature>
<feature type="binding site" evidence="1">
    <location>
        <position position="206"/>
    </location>
    <ligand>
        <name>Zn(2+)</name>
        <dbReference type="ChEBI" id="CHEBI:29105"/>
    </ligand>
</feature>
<feature type="binding site" evidence="1">
    <location>
        <position position="209"/>
    </location>
    <ligand>
        <name>Zn(2+)</name>
        <dbReference type="ChEBI" id="CHEBI:29105"/>
    </ligand>
</feature>
<feature type="binding site" evidence="1">
    <location>
        <position position="212"/>
    </location>
    <ligand>
        <name>Zn(2+)</name>
        <dbReference type="ChEBI" id="CHEBI:29105"/>
    </ligand>
</feature>
<evidence type="ECO:0000255" key="1">
    <source>
        <dbReference type="HAMAP-Rule" id="MF_01633"/>
    </source>
</evidence>
<evidence type="ECO:0000305" key="2"/>
<sequence length="240" mass="26530">MQKTFESKTATSKAVVVFSGGQDSTTCLIQALTQYDEVHGITFDYGQRHREEIEVAKSLAKRLKITSHKVMDVTLLNELAISALTRDAIPVSHELMENGLPNTFVPGRNILFLTLAGIYAYQLGAEAIITGVCETDFSGYPDCRNDFVKAMESALVQGMDKQLKIITPLMWLNKAQTWALADKYQQLDLVRHHTLTCYNGVIGDGCGDCPACHLRKRGLDDYLQNKAAVMAELDASEPKA</sequence>
<keyword id="KW-0067">ATP-binding</keyword>
<keyword id="KW-0436">Ligase</keyword>
<keyword id="KW-0479">Metal-binding</keyword>
<keyword id="KW-0547">Nucleotide-binding</keyword>
<keyword id="KW-0671">Queuosine biosynthesis</keyword>
<keyword id="KW-0862">Zinc</keyword>